<accession>Q8X6Z6</accession>
<accession>Q7AAA1</accession>
<evidence type="ECO:0000255" key="1">
    <source>
        <dbReference type="HAMAP-Rule" id="MF_01594"/>
    </source>
</evidence>
<reference key="1">
    <citation type="journal article" date="2001" name="Nature">
        <title>Genome sequence of enterohaemorrhagic Escherichia coli O157:H7.</title>
        <authorList>
            <person name="Perna N.T."/>
            <person name="Plunkett G. III"/>
            <person name="Burland V."/>
            <person name="Mau B."/>
            <person name="Glasner J.D."/>
            <person name="Rose D.J."/>
            <person name="Mayhew G.F."/>
            <person name="Evans P.S."/>
            <person name="Gregor J."/>
            <person name="Kirkpatrick H.A."/>
            <person name="Posfai G."/>
            <person name="Hackett J."/>
            <person name="Klink S."/>
            <person name="Boutin A."/>
            <person name="Shao Y."/>
            <person name="Miller L."/>
            <person name="Grotbeck E.J."/>
            <person name="Davis N.W."/>
            <person name="Lim A."/>
            <person name="Dimalanta E.T."/>
            <person name="Potamousis K."/>
            <person name="Apodaca J."/>
            <person name="Anantharaman T.S."/>
            <person name="Lin J."/>
            <person name="Yen G."/>
            <person name="Schwartz D.C."/>
            <person name="Welch R.A."/>
            <person name="Blattner F.R."/>
        </authorList>
    </citation>
    <scope>NUCLEOTIDE SEQUENCE [LARGE SCALE GENOMIC DNA]</scope>
    <source>
        <strain>O157:H7 / EDL933 / ATCC 700927 / EHEC</strain>
    </source>
</reference>
<reference key="2">
    <citation type="journal article" date="2001" name="DNA Res.">
        <title>Complete genome sequence of enterohemorrhagic Escherichia coli O157:H7 and genomic comparison with a laboratory strain K-12.</title>
        <authorList>
            <person name="Hayashi T."/>
            <person name="Makino K."/>
            <person name="Ohnishi M."/>
            <person name="Kurokawa K."/>
            <person name="Ishii K."/>
            <person name="Yokoyama K."/>
            <person name="Han C.-G."/>
            <person name="Ohtsubo E."/>
            <person name="Nakayama K."/>
            <person name="Murata T."/>
            <person name="Tanaka M."/>
            <person name="Tobe T."/>
            <person name="Iida T."/>
            <person name="Takami H."/>
            <person name="Honda T."/>
            <person name="Sasakawa C."/>
            <person name="Ogasawara N."/>
            <person name="Yasunaga T."/>
            <person name="Kuhara S."/>
            <person name="Shiba T."/>
            <person name="Hattori M."/>
            <person name="Shinagawa H."/>
        </authorList>
    </citation>
    <scope>NUCLEOTIDE SEQUENCE [LARGE SCALE GENOMIC DNA]</scope>
    <source>
        <strain>O157:H7 / Sakai / RIMD 0509952 / EHEC</strain>
    </source>
</reference>
<keyword id="KW-0997">Cell inner membrane</keyword>
<keyword id="KW-1003">Cell membrane</keyword>
<keyword id="KW-0378">Hydrolase</keyword>
<keyword id="KW-0472">Membrane</keyword>
<keyword id="KW-0645">Protease</keyword>
<keyword id="KW-1185">Reference proteome</keyword>
<keyword id="KW-0720">Serine protease</keyword>
<keyword id="KW-0812">Transmembrane</keyword>
<keyword id="KW-1133">Transmembrane helix</keyword>
<gene>
    <name evidence="1" type="primary">glpG</name>
    <name type="ordered locus">Z4784</name>
    <name type="ordered locus">ECs4267</name>
</gene>
<name>GLPG_ECO57</name>
<protein>
    <recommendedName>
        <fullName evidence="1">Rhomboid protease GlpG</fullName>
        <ecNumber evidence="1">3.4.21.105</ecNumber>
    </recommendedName>
    <alternativeName>
        <fullName evidence="1">Intramembrane serine protease</fullName>
    </alternativeName>
</protein>
<feature type="chain" id="PRO_0000321681" description="Rhomboid protease GlpG">
    <location>
        <begin position="1"/>
        <end position="276"/>
    </location>
</feature>
<feature type="transmembrane region" description="Helical" evidence="1">
    <location>
        <begin position="94"/>
        <end position="114"/>
    </location>
</feature>
<feature type="transmembrane region" description="Helical" evidence="1">
    <location>
        <begin position="142"/>
        <end position="162"/>
    </location>
</feature>
<feature type="transmembrane region" description="Helical" evidence="1">
    <location>
        <begin position="169"/>
        <end position="189"/>
    </location>
</feature>
<feature type="transmembrane region" description="Helical" evidence="1">
    <location>
        <begin position="192"/>
        <end position="212"/>
    </location>
</feature>
<feature type="transmembrane region" description="Helical" evidence="1">
    <location>
        <begin position="229"/>
        <end position="249"/>
    </location>
</feature>
<feature type="transmembrane region" description="Helical" evidence="1">
    <location>
        <begin position="250"/>
        <end position="270"/>
    </location>
</feature>
<feature type="active site" description="Nucleophile" evidence="1">
    <location>
        <position position="201"/>
    </location>
</feature>
<feature type="active site" evidence="1">
    <location>
        <position position="254"/>
    </location>
</feature>
<dbReference type="EC" id="3.4.21.105" evidence="1"/>
<dbReference type="EMBL" id="AE005174">
    <property type="protein sequence ID" value="AAG58528.1"/>
    <property type="molecule type" value="Genomic_DNA"/>
</dbReference>
<dbReference type="EMBL" id="BA000007">
    <property type="protein sequence ID" value="BAB37690.1"/>
    <property type="molecule type" value="Genomic_DNA"/>
</dbReference>
<dbReference type="PIR" id="C91162">
    <property type="entry name" value="C91162"/>
</dbReference>
<dbReference type="PIR" id="D86008">
    <property type="entry name" value="D86008"/>
</dbReference>
<dbReference type="RefSeq" id="NP_312294.1">
    <property type="nucleotide sequence ID" value="NC_002695.1"/>
</dbReference>
<dbReference type="RefSeq" id="WP_000928722.1">
    <property type="nucleotide sequence ID" value="NZ_VOAI01000004.1"/>
</dbReference>
<dbReference type="SMR" id="Q8X6Z6"/>
<dbReference type="STRING" id="155864.Z4784"/>
<dbReference type="MEROPS" id="S54.016"/>
<dbReference type="GeneID" id="915876"/>
<dbReference type="GeneID" id="93778572"/>
<dbReference type="KEGG" id="ece:Z4784"/>
<dbReference type="KEGG" id="ecs:ECs_4267"/>
<dbReference type="PATRIC" id="fig|386585.9.peg.4457"/>
<dbReference type="eggNOG" id="COG0705">
    <property type="taxonomic scope" value="Bacteria"/>
</dbReference>
<dbReference type="HOGENOM" id="CLU_058989_0_0_6"/>
<dbReference type="OMA" id="LLGHCWI"/>
<dbReference type="Proteomes" id="UP000000558">
    <property type="component" value="Chromosome"/>
</dbReference>
<dbReference type="Proteomes" id="UP000002519">
    <property type="component" value="Chromosome"/>
</dbReference>
<dbReference type="GO" id="GO:0005886">
    <property type="term" value="C:plasma membrane"/>
    <property type="evidence" value="ECO:0007669"/>
    <property type="project" value="UniProtKB-SubCell"/>
</dbReference>
<dbReference type="GO" id="GO:0004252">
    <property type="term" value="F:serine-type endopeptidase activity"/>
    <property type="evidence" value="ECO:0007669"/>
    <property type="project" value="UniProtKB-UniRule"/>
</dbReference>
<dbReference type="GO" id="GO:0006508">
    <property type="term" value="P:proteolysis"/>
    <property type="evidence" value="ECO:0007669"/>
    <property type="project" value="UniProtKB-UniRule"/>
</dbReference>
<dbReference type="FunFam" id="1.20.1540.10:FF:000003">
    <property type="entry name" value="Rhomboid protease GlpG"/>
    <property type="match status" value="1"/>
</dbReference>
<dbReference type="FunFam" id="3.30.70.2350:FF:000001">
    <property type="entry name" value="Rhomboid protease GlpG"/>
    <property type="match status" value="1"/>
</dbReference>
<dbReference type="Gene3D" id="3.30.70.2350">
    <property type="match status" value="1"/>
</dbReference>
<dbReference type="Gene3D" id="1.20.1540.10">
    <property type="entry name" value="Rhomboid-like"/>
    <property type="match status" value="1"/>
</dbReference>
<dbReference type="HAMAP" id="MF_01594">
    <property type="entry name" value="Rhomboid_GlpG"/>
    <property type="match status" value="1"/>
</dbReference>
<dbReference type="InterPro" id="IPR038236">
    <property type="entry name" value="GlpG_N_sf"/>
</dbReference>
<dbReference type="InterPro" id="IPR022732">
    <property type="entry name" value="Peptidase_S54_GlpG_N"/>
</dbReference>
<dbReference type="InterPro" id="IPR022764">
    <property type="entry name" value="Peptidase_S54_rhomboid_dom"/>
</dbReference>
<dbReference type="InterPro" id="IPR035952">
    <property type="entry name" value="Rhomboid-like_sf"/>
</dbReference>
<dbReference type="InterPro" id="IPR023662">
    <property type="entry name" value="Rhomboid_protease_GlpG"/>
</dbReference>
<dbReference type="NCBIfam" id="NF008155">
    <property type="entry name" value="PRK10907.1"/>
    <property type="match status" value="1"/>
</dbReference>
<dbReference type="NCBIfam" id="TIGR04239">
    <property type="entry name" value="rhombo_GlpG"/>
    <property type="match status" value="1"/>
</dbReference>
<dbReference type="PANTHER" id="PTHR43066:SF26">
    <property type="entry name" value="RHOMBOID PROTEASE GLPG"/>
    <property type="match status" value="1"/>
</dbReference>
<dbReference type="PANTHER" id="PTHR43066">
    <property type="entry name" value="RHOMBOID-RELATED PROTEIN"/>
    <property type="match status" value="1"/>
</dbReference>
<dbReference type="Pfam" id="PF01694">
    <property type="entry name" value="Rhomboid"/>
    <property type="match status" value="1"/>
</dbReference>
<dbReference type="Pfam" id="PF12122">
    <property type="entry name" value="Rhomboid_N"/>
    <property type="match status" value="1"/>
</dbReference>
<dbReference type="SUPFAM" id="SSF144091">
    <property type="entry name" value="Rhomboid-like"/>
    <property type="match status" value="1"/>
</dbReference>
<organism>
    <name type="scientific">Escherichia coli O157:H7</name>
    <dbReference type="NCBI Taxonomy" id="83334"/>
    <lineage>
        <taxon>Bacteria</taxon>
        <taxon>Pseudomonadati</taxon>
        <taxon>Pseudomonadota</taxon>
        <taxon>Gammaproteobacteria</taxon>
        <taxon>Enterobacterales</taxon>
        <taxon>Enterobacteriaceae</taxon>
        <taxon>Escherichia</taxon>
    </lineage>
</organism>
<proteinExistence type="inferred from homology"/>
<sequence length="276" mass="31277">MLMITSFANPRVAQAFVDYMATQGVILTIQQHNQSDVWLADESQAERVRAELARFLENPADPRYLAASWQAGHTGSGLHYRRYPFFAALRERAGPVTWVMMIACVVVFIAMQILGDQEVMLWLAWPFDPALKFEFWRYFTHALMHFSLMHILFNLLWWWYLGGAVEKRLGSGKLIVITLISALLSGYVQQKFSGPWFGGLSGVVYALMGYVWLRGERDPQSGIYLQRGLIIFALIWIVAGWFDLFGMSMANGAHIAGLAVGLAMAFVDSLNARKRK</sequence>
<comment type="function">
    <text evidence="1">Rhomboid-type serine protease that catalyzes intramembrane proteolysis.</text>
</comment>
<comment type="catalytic activity">
    <reaction evidence="1">
        <text>Cleaves type-1 transmembrane domains using a catalytic dyad composed of serine and histidine that are contributed by different transmembrane domains.</text>
        <dbReference type="EC" id="3.4.21.105"/>
    </reaction>
</comment>
<comment type="subcellular location">
    <subcellularLocation>
        <location evidence="1">Cell inner membrane</location>
        <topology evidence="1">Multi-pass membrane protein</topology>
    </subcellularLocation>
</comment>
<comment type="similarity">
    <text evidence="1">Belongs to the peptidase S54 family.</text>
</comment>